<proteinExistence type="inferred from homology"/>
<sequence length="192" mass="21720">MTEQTIDNILPASKNNVKQWYVVHTASGAEKRIKEDILRKIAKQKMTDFFEDILIPVFGVSEVKRGKNVKVEKKLMPSYILIKMNMTDKSWHLVKNISGVTGFLGSKIVPKALTESEIQNIFNNLEAEAKVAKNSKLYEVGEVVTVTDGPFETFMGTVEEIDKERNRLKVSVSIFGKATPIELNFNQVKKND</sequence>
<keyword id="KW-0804">Transcription</keyword>
<keyword id="KW-0889">Transcription antitermination</keyword>
<keyword id="KW-0805">Transcription regulation</keyword>
<keyword id="KW-0806">Transcription termination</keyword>
<feature type="chain" id="PRO_0000288748" description="Transcription termination/antitermination protein NusG">
    <location>
        <begin position="1"/>
        <end position="192"/>
    </location>
</feature>
<feature type="domain" description="KOW" evidence="1">
    <location>
        <begin position="140"/>
        <end position="168"/>
    </location>
</feature>
<dbReference type="EMBL" id="AE017197">
    <property type="protein sequence ID" value="AAU03609.1"/>
    <property type="molecule type" value="Genomic_DNA"/>
</dbReference>
<dbReference type="RefSeq" id="WP_011190596.1">
    <property type="nucleotide sequence ID" value="NC_006142.1"/>
</dbReference>
<dbReference type="SMR" id="Q68XN3"/>
<dbReference type="KEGG" id="rty:RT0124"/>
<dbReference type="eggNOG" id="COG0250">
    <property type="taxonomic scope" value="Bacteria"/>
</dbReference>
<dbReference type="HOGENOM" id="CLU_067287_1_0_5"/>
<dbReference type="OrthoDB" id="9809075at2"/>
<dbReference type="Proteomes" id="UP000000604">
    <property type="component" value="Chromosome"/>
</dbReference>
<dbReference type="GO" id="GO:0005829">
    <property type="term" value="C:cytosol"/>
    <property type="evidence" value="ECO:0007669"/>
    <property type="project" value="TreeGrafter"/>
</dbReference>
<dbReference type="GO" id="GO:0006353">
    <property type="term" value="P:DNA-templated transcription termination"/>
    <property type="evidence" value="ECO:0007669"/>
    <property type="project" value="UniProtKB-UniRule"/>
</dbReference>
<dbReference type="GO" id="GO:0032784">
    <property type="term" value="P:regulation of DNA-templated transcription elongation"/>
    <property type="evidence" value="ECO:0007669"/>
    <property type="project" value="InterPro"/>
</dbReference>
<dbReference type="GO" id="GO:0031564">
    <property type="term" value="P:transcription antitermination"/>
    <property type="evidence" value="ECO:0007669"/>
    <property type="project" value="UniProtKB-UniRule"/>
</dbReference>
<dbReference type="GO" id="GO:0140673">
    <property type="term" value="P:transcription elongation-coupled chromatin remodeling"/>
    <property type="evidence" value="ECO:0007669"/>
    <property type="project" value="InterPro"/>
</dbReference>
<dbReference type="CDD" id="cd06091">
    <property type="entry name" value="KOW_NusG"/>
    <property type="match status" value="1"/>
</dbReference>
<dbReference type="CDD" id="cd09891">
    <property type="entry name" value="NGN_Bact_1"/>
    <property type="match status" value="1"/>
</dbReference>
<dbReference type="FunFam" id="2.30.30.30:FF:000002">
    <property type="entry name" value="Transcription termination/antitermination factor NusG"/>
    <property type="match status" value="1"/>
</dbReference>
<dbReference type="Gene3D" id="2.30.30.30">
    <property type="match status" value="1"/>
</dbReference>
<dbReference type="Gene3D" id="3.30.70.940">
    <property type="entry name" value="NusG, N-terminal domain"/>
    <property type="match status" value="1"/>
</dbReference>
<dbReference type="HAMAP" id="MF_00948">
    <property type="entry name" value="NusG"/>
    <property type="match status" value="1"/>
</dbReference>
<dbReference type="InterPro" id="IPR005824">
    <property type="entry name" value="KOW"/>
</dbReference>
<dbReference type="InterPro" id="IPR047050">
    <property type="entry name" value="NGN"/>
</dbReference>
<dbReference type="InterPro" id="IPR006645">
    <property type="entry name" value="NGN-like_dom"/>
</dbReference>
<dbReference type="InterPro" id="IPR036735">
    <property type="entry name" value="NGN_dom_sf"/>
</dbReference>
<dbReference type="InterPro" id="IPR043425">
    <property type="entry name" value="NusG-like"/>
</dbReference>
<dbReference type="InterPro" id="IPR014722">
    <property type="entry name" value="Rib_uL2_dom2"/>
</dbReference>
<dbReference type="InterPro" id="IPR001062">
    <property type="entry name" value="Transcrpt_antiterm_NusG"/>
</dbReference>
<dbReference type="InterPro" id="IPR015869">
    <property type="entry name" value="Transcrpt_antiterm_NusG_bac_CS"/>
</dbReference>
<dbReference type="InterPro" id="IPR008991">
    <property type="entry name" value="Translation_prot_SH3-like_sf"/>
</dbReference>
<dbReference type="NCBIfam" id="TIGR00922">
    <property type="entry name" value="nusG"/>
    <property type="match status" value="1"/>
</dbReference>
<dbReference type="PANTHER" id="PTHR30265">
    <property type="entry name" value="RHO-INTERACTING TRANSCRIPTION TERMINATION FACTOR NUSG"/>
    <property type="match status" value="1"/>
</dbReference>
<dbReference type="PANTHER" id="PTHR30265:SF2">
    <property type="entry name" value="TRANSCRIPTION TERMINATION_ANTITERMINATION PROTEIN NUSG"/>
    <property type="match status" value="1"/>
</dbReference>
<dbReference type="Pfam" id="PF00467">
    <property type="entry name" value="KOW"/>
    <property type="match status" value="1"/>
</dbReference>
<dbReference type="Pfam" id="PF02357">
    <property type="entry name" value="NusG"/>
    <property type="match status" value="1"/>
</dbReference>
<dbReference type="PRINTS" id="PR00338">
    <property type="entry name" value="NUSGTNSCPFCT"/>
</dbReference>
<dbReference type="SMART" id="SM00739">
    <property type="entry name" value="KOW"/>
    <property type="match status" value="1"/>
</dbReference>
<dbReference type="SMART" id="SM00738">
    <property type="entry name" value="NGN"/>
    <property type="match status" value="1"/>
</dbReference>
<dbReference type="SUPFAM" id="SSF82679">
    <property type="entry name" value="N-utilization substance G protein NusG, N-terminal domain"/>
    <property type="match status" value="1"/>
</dbReference>
<dbReference type="SUPFAM" id="SSF50104">
    <property type="entry name" value="Translation proteins SH3-like domain"/>
    <property type="match status" value="1"/>
</dbReference>
<dbReference type="PROSITE" id="PS01014">
    <property type="entry name" value="NUSG"/>
    <property type="match status" value="1"/>
</dbReference>
<accession>Q68XN3</accession>
<organism>
    <name type="scientific">Rickettsia typhi (strain ATCC VR-144 / Wilmington)</name>
    <dbReference type="NCBI Taxonomy" id="257363"/>
    <lineage>
        <taxon>Bacteria</taxon>
        <taxon>Pseudomonadati</taxon>
        <taxon>Pseudomonadota</taxon>
        <taxon>Alphaproteobacteria</taxon>
        <taxon>Rickettsiales</taxon>
        <taxon>Rickettsiaceae</taxon>
        <taxon>Rickettsieae</taxon>
        <taxon>Rickettsia</taxon>
        <taxon>typhus group</taxon>
    </lineage>
</organism>
<protein>
    <recommendedName>
        <fullName evidence="1">Transcription termination/antitermination protein NusG</fullName>
    </recommendedName>
</protein>
<reference key="1">
    <citation type="journal article" date="2004" name="J. Bacteriol.">
        <title>Complete genome sequence of Rickettsia typhi and comparison with sequences of other Rickettsiae.</title>
        <authorList>
            <person name="McLeod M.P."/>
            <person name="Qin X."/>
            <person name="Karpathy S.E."/>
            <person name="Gioia J."/>
            <person name="Highlander S.K."/>
            <person name="Fox G.E."/>
            <person name="McNeill T.Z."/>
            <person name="Jiang H."/>
            <person name="Muzny D."/>
            <person name="Jacob L.S."/>
            <person name="Hawes A.C."/>
            <person name="Sodergren E."/>
            <person name="Gill R."/>
            <person name="Hume J."/>
            <person name="Morgan M."/>
            <person name="Fan G."/>
            <person name="Amin A.G."/>
            <person name="Gibbs R.A."/>
            <person name="Hong C."/>
            <person name="Yu X.-J."/>
            <person name="Walker D.H."/>
            <person name="Weinstock G.M."/>
        </authorList>
    </citation>
    <scope>NUCLEOTIDE SEQUENCE [LARGE SCALE GENOMIC DNA]</scope>
    <source>
        <strain>ATCC VR-144 / Wilmington</strain>
    </source>
</reference>
<name>NUSG_RICTY</name>
<evidence type="ECO:0000255" key="1">
    <source>
        <dbReference type="HAMAP-Rule" id="MF_00948"/>
    </source>
</evidence>
<gene>
    <name evidence="1" type="primary">nusG</name>
    <name type="ordered locus">RT0124</name>
</gene>
<comment type="function">
    <text evidence="1">Participates in transcription elongation, termination and antitermination.</text>
</comment>
<comment type="similarity">
    <text evidence="1">Belongs to the NusG family.</text>
</comment>